<evidence type="ECO:0000255" key="1">
    <source>
        <dbReference type="HAMAP-Rule" id="MF_01635"/>
    </source>
</evidence>
<sequence>MIPWNAYVRLLRLNKPIGILLLWYPTAWALWMANQGFPSIDLLMIFLLGTVFMRSAGCVINDIADRHIDRHVARTQFRPLTSGEVSLSEAFILLFILLCASLLLLLKLPINCFYFAVISVLITFVYPFCKRFLNAPQLILGLAFSMGIPMAFIASGKNLNSDFVVLFLINFTWIIAYDTMYAMTDKADDLKIGVKSTAIYFASYDRLIIALLLIFLHSLWLVWAINKNAEWFFYLLWCTAAGILTYQLKLIYARIPKNCFKAFLVSGYYGLVMWFAVGLALI</sequence>
<comment type="function">
    <text evidence="1">Catalyzes the prenylation of para-hydroxybenzoate (PHB) with an all-trans polyprenyl group. Mediates the second step in the final reaction sequence of ubiquinone-8 (UQ-8) biosynthesis, which is the condensation of the polyisoprenoid side chain with PHB, generating the first membrane-bound Q intermediate 3-octaprenyl-4-hydroxybenzoate.</text>
</comment>
<comment type="catalytic activity">
    <reaction evidence="1">
        <text>all-trans-octaprenyl diphosphate + 4-hydroxybenzoate = 4-hydroxy-3-(all-trans-octaprenyl)benzoate + diphosphate</text>
        <dbReference type="Rhea" id="RHEA:27782"/>
        <dbReference type="ChEBI" id="CHEBI:1617"/>
        <dbReference type="ChEBI" id="CHEBI:17879"/>
        <dbReference type="ChEBI" id="CHEBI:33019"/>
        <dbReference type="ChEBI" id="CHEBI:57711"/>
        <dbReference type="EC" id="2.5.1.39"/>
    </reaction>
</comment>
<comment type="cofactor">
    <cofactor evidence="1">
        <name>Mg(2+)</name>
        <dbReference type="ChEBI" id="CHEBI:18420"/>
    </cofactor>
</comment>
<comment type="pathway">
    <text evidence="1">Cofactor biosynthesis; ubiquinone biosynthesis.</text>
</comment>
<comment type="subcellular location">
    <subcellularLocation>
        <location evidence="1">Cell inner membrane</location>
        <topology evidence="1">Multi-pass membrane protein</topology>
    </subcellularLocation>
</comment>
<comment type="similarity">
    <text evidence="1">Belongs to the UbiA prenyltransferase family.</text>
</comment>
<accession>Q5X5D5</accession>
<protein>
    <recommendedName>
        <fullName evidence="1">4-hydroxybenzoate octaprenyltransferase</fullName>
        <ecNumber evidence="1">2.5.1.39</ecNumber>
    </recommendedName>
    <alternativeName>
        <fullName evidence="1">4-HB polyprenyltransferase</fullName>
    </alternativeName>
</protein>
<proteinExistence type="inferred from homology"/>
<dbReference type="EC" id="2.5.1.39" evidence="1"/>
<dbReference type="EMBL" id="CR628336">
    <property type="protein sequence ID" value="CAH12536.1"/>
    <property type="molecule type" value="Genomic_DNA"/>
</dbReference>
<dbReference type="RefSeq" id="WP_011213717.1">
    <property type="nucleotide sequence ID" value="NC_006368.1"/>
</dbReference>
<dbReference type="SMR" id="Q5X5D5"/>
<dbReference type="KEGG" id="lpp:lpp1385"/>
<dbReference type="LegioList" id="lpp1385"/>
<dbReference type="HOGENOM" id="CLU_034879_1_0_6"/>
<dbReference type="UniPathway" id="UPA00232"/>
<dbReference type="GO" id="GO:0005886">
    <property type="term" value="C:plasma membrane"/>
    <property type="evidence" value="ECO:0007669"/>
    <property type="project" value="UniProtKB-SubCell"/>
</dbReference>
<dbReference type="GO" id="GO:0008412">
    <property type="term" value="F:4-hydroxybenzoate polyprenyltransferase activity"/>
    <property type="evidence" value="ECO:0007669"/>
    <property type="project" value="UniProtKB-UniRule"/>
</dbReference>
<dbReference type="GO" id="GO:0006744">
    <property type="term" value="P:ubiquinone biosynthetic process"/>
    <property type="evidence" value="ECO:0007669"/>
    <property type="project" value="UniProtKB-UniRule"/>
</dbReference>
<dbReference type="CDD" id="cd13959">
    <property type="entry name" value="PT_UbiA_COQ2"/>
    <property type="match status" value="1"/>
</dbReference>
<dbReference type="FunFam" id="1.10.357.140:FF:000008">
    <property type="entry name" value="4-hydroxybenzoate octaprenyltransferase"/>
    <property type="match status" value="1"/>
</dbReference>
<dbReference type="FunFam" id="1.20.120.1780:FF:000001">
    <property type="entry name" value="4-hydroxybenzoate octaprenyltransferase"/>
    <property type="match status" value="1"/>
</dbReference>
<dbReference type="Gene3D" id="1.10.357.140">
    <property type="entry name" value="UbiA prenyltransferase"/>
    <property type="match status" value="1"/>
</dbReference>
<dbReference type="Gene3D" id="1.20.120.1780">
    <property type="entry name" value="UbiA prenyltransferase"/>
    <property type="match status" value="1"/>
</dbReference>
<dbReference type="HAMAP" id="MF_01635">
    <property type="entry name" value="UbiA"/>
    <property type="match status" value="1"/>
</dbReference>
<dbReference type="InterPro" id="IPR006370">
    <property type="entry name" value="HB_polyprenyltransferase-like"/>
</dbReference>
<dbReference type="InterPro" id="IPR039653">
    <property type="entry name" value="Prenyltransferase"/>
</dbReference>
<dbReference type="InterPro" id="IPR000537">
    <property type="entry name" value="UbiA_prenyltransferase"/>
</dbReference>
<dbReference type="InterPro" id="IPR030470">
    <property type="entry name" value="UbiA_prenylTrfase_CS"/>
</dbReference>
<dbReference type="InterPro" id="IPR044878">
    <property type="entry name" value="UbiA_sf"/>
</dbReference>
<dbReference type="NCBIfam" id="TIGR01474">
    <property type="entry name" value="ubiA_proteo"/>
    <property type="match status" value="1"/>
</dbReference>
<dbReference type="PANTHER" id="PTHR11048:SF28">
    <property type="entry name" value="4-HYDROXYBENZOATE POLYPRENYLTRANSFERASE, MITOCHONDRIAL"/>
    <property type="match status" value="1"/>
</dbReference>
<dbReference type="PANTHER" id="PTHR11048">
    <property type="entry name" value="PRENYLTRANSFERASES"/>
    <property type="match status" value="1"/>
</dbReference>
<dbReference type="Pfam" id="PF01040">
    <property type="entry name" value="UbiA"/>
    <property type="match status" value="1"/>
</dbReference>
<dbReference type="PROSITE" id="PS00943">
    <property type="entry name" value="UBIA"/>
    <property type="match status" value="1"/>
</dbReference>
<reference key="1">
    <citation type="journal article" date="2004" name="Nat. Genet.">
        <title>Evidence in the Legionella pneumophila genome for exploitation of host cell functions and high genome plasticity.</title>
        <authorList>
            <person name="Cazalet C."/>
            <person name="Rusniok C."/>
            <person name="Brueggemann H."/>
            <person name="Zidane N."/>
            <person name="Magnier A."/>
            <person name="Ma L."/>
            <person name="Tichit M."/>
            <person name="Jarraud S."/>
            <person name="Bouchier C."/>
            <person name="Vandenesch F."/>
            <person name="Kunst F."/>
            <person name="Etienne J."/>
            <person name="Glaser P."/>
            <person name="Buchrieser C."/>
        </authorList>
    </citation>
    <scope>NUCLEOTIDE SEQUENCE [LARGE SCALE GENOMIC DNA]</scope>
    <source>
        <strain>Paris</strain>
    </source>
</reference>
<name>UBIA_LEGPA</name>
<keyword id="KW-0997">Cell inner membrane</keyword>
<keyword id="KW-1003">Cell membrane</keyword>
<keyword id="KW-0460">Magnesium</keyword>
<keyword id="KW-0472">Membrane</keyword>
<keyword id="KW-0808">Transferase</keyword>
<keyword id="KW-0812">Transmembrane</keyword>
<keyword id="KW-1133">Transmembrane helix</keyword>
<keyword id="KW-0831">Ubiquinone biosynthesis</keyword>
<organism>
    <name type="scientific">Legionella pneumophila (strain Paris)</name>
    <dbReference type="NCBI Taxonomy" id="297246"/>
    <lineage>
        <taxon>Bacteria</taxon>
        <taxon>Pseudomonadati</taxon>
        <taxon>Pseudomonadota</taxon>
        <taxon>Gammaproteobacteria</taxon>
        <taxon>Legionellales</taxon>
        <taxon>Legionellaceae</taxon>
        <taxon>Legionella</taxon>
    </lineage>
</organism>
<gene>
    <name evidence="1" type="primary">ubiA</name>
    <name type="ordered locus">lpp1385</name>
</gene>
<feature type="chain" id="PRO_0000262804" description="4-hydroxybenzoate octaprenyltransferase">
    <location>
        <begin position="1"/>
        <end position="282"/>
    </location>
</feature>
<feature type="transmembrane region" description="Helical" evidence="1">
    <location>
        <begin position="17"/>
        <end position="37"/>
    </location>
</feature>
<feature type="transmembrane region" description="Helical" evidence="1">
    <location>
        <begin position="40"/>
        <end position="60"/>
    </location>
</feature>
<feature type="transmembrane region" description="Helical" evidence="1">
    <location>
        <begin position="90"/>
        <end position="110"/>
    </location>
</feature>
<feature type="transmembrane region" description="Helical" evidence="1">
    <location>
        <begin position="113"/>
        <end position="133"/>
    </location>
</feature>
<feature type="transmembrane region" description="Helical" evidence="1">
    <location>
        <begin position="135"/>
        <end position="155"/>
    </location>
</feature>
<feature type="transmembrane region" description="Helical" evidence="1">
    <location>
        <begin position="163"/>
        <end position="183"/>
    </location>
</feature>
<feature type="transmembrane region" description="Helical" evidence="1">
    <location>
        <begin position="207"/>
        <end position="227"/>
    </location>
</feature>
<feature type="transmembrane region" description="Helical" evidence="1">
    <location>
        <begin position="231"/>
        <end position="251"/>
    </location>
</feature>
<feature type="transmembrane region" description="Helical" evidence="1">
    <location>
        <begin position="262"/>
        <end position="282"/>
    </location>
</feature>